<reference key="1">
    <citation type="journal article" date="2005" name="J. Bacteriol.">
        <title>Swine and poultry pathogens: the complete genome sequences of two strains of Mycoplasma hyopneumoniae and a strain of Mycoplasma synoviae.</title>
        <authorList>
            <person name="Vasconcelos A.T.R."/>
            <person name="Ferreira H.B."/>
            <person name="Bizarro C.V."/>
            <person name="Bonatto S.L."/>
            <person name="Carvalho M.O."/>
            <person name="Pinto P.M."/>
            <person name="Almeida D.F."/>
            <person name="Almeida L.G.P."/>
            <person name="Almeida R."/>
            <person name="Alves-Junior L."/>
            <person name="Assuncao E.N."/>
            <person name="Azevedo V.A.C."/>
            <person name="Bogo M.R."/>
            <person name="Brigido M.M."/>
            <person name="Brocchi M."/>
            <person name="Burity H.A."/>
            <person name="Camargo A.A."/>
            <person name="Camargo S.S."/>
            <person name="Carepo M.S."/>
            <person name="Carraro D.M."/>
            <person name="de Mattos Cascardo J.C."/>
            <person name="Castro L.A."/>
            <person name="Cavalcanti G."/>
            <person name="Chemale G."/>
            <person name="Collevatti R.G."/>
            <person name="Cunha C.W."/>
            <person name="Dallagiovanna B."/>
            <person name="Dambros B.P."/>
            <person name="Dellagostin O.A."/>
            <person name="Falcao C."/>
            <person name="Fantinatti-Garboggini F."/>
            <person name="Felipe M.S.S."/>
            <person name="Fiorentin L."/>
            <person name="Franco G.R."/>
            <person name="Freitas N.S.A."/>
            <person name="Frias D."/>
            <person name="Grangeiro T.B."/>
            <person name="Grisard E.C."/>
            <person name="Guimaraes C.T."/>
            <person name="Hungria M."/>
            <person name="Jardim S.N."/>
            <person name="Krieger M.A."/>
            <person name="Laurino J.P."/>
            <person name="Lima L.F.A."/>
            <person name="Lopes M.I."/>
            <person name="Loreto E.L.S."/>
            <person name="Madeira H.M.F."/>
            <person name="Manfio G.P."/>
            <person name="Maranhao A.Q."/>
            <person name="Martinkovics C.T."/>
            <person name="Medeiros S.R.B."/>
            <person name="Moreira M.A.M."/>
            <person name="Neiva M."/>
            <person name="Ramalho-Neto C.E."/>
            <person name="Nicolas M.F."/>
            <person name="Oliveira S.C."/>
            <person name="Paixao R.F.C."/>
            <person name="Pedrosa F.O."/>
            <person name="Pena S.D.J."/>
            <person name="Pereira M."/>
            <person name="Pereira-Ferrari L."/>
            <person name="Piffer I."/>
            <person name="Pinto L.S."/>
            <person name="Potrich D.P."/>
            <person name="Salim A.C.M."/>
            <person name="Santos F.R."/>
            <person name="Schmitt R."/>
            <person name="Schneider M.P.C."/>
            <person name="Schrank A."/>
            <person name="Schrank I.S."/>
            <person name="Schuck A.F."/>
            <person name="Seuanez H.N."/>
            <person name="Silva D.W."/>
            <person name="Silva R."/>
            <person name="Silva S.C."/>
            <person name="Soares C.M.A."/>
            <person name="Souza K.R.L."/>
            <person name="Souza R.C."/>
            <person name="Staats C.C."/>
            <person name="Steffens M.B.R."/>
            <person name="Teixeira S.M.R."/>
            <person name="Urmenyi T.P."/>
            <person name="Vainstein M.H."/>
            <person name="Zuccherato L.W."/>
            <person name="Simpson A.J.G."/>
            <person name="Zaha A."/>
        </authorList>
    </citation>
    <scope>NUCLEOTIDE SEQUENCE [LARGE SCALE GENOMIC DNA]</scope>
    <source>
        <strain>J / ATCC 25934 / NCTC 10110</strain>
    </source>
</reference>
<proteinExistence type="inferred from homology"/>
<accession>Q4AAU6</accession>
<name>MNMG_MESHJ</name>
<evidence type="ECO:0000255" key="1">
    <source>
        <dbReference type="HAMAP-Rule" id="MF_00129"/>
    </source>
</evidence>
<organism>
    <name type="scientific">Mesomycoplasma hyopneumoniae (strain J / ATCC 25934 / NCTC 10110)</name>
    <name type="common">Mycoplasma hyopneumoniae</name>
    <dbReference type="NCBI Taxonomy" id="262719"/>
    <lineage>
        <taxon>Bacteria</taxon>
        <taxon>Bacillati</taxon>
        <taxon>Mycoplasmatota</taxon>
        <taxon>Mycoplasmoidales</taxon>
        <taxon>Metamycoplasmataceae</taxon>
        <taxon>Mesomycoplasma</taxon>
    </lineage>
</organism>
<feature type="chain" id="PRO_1000016625" description="tRNA uridine 5-carboxymethylaminomethyl modification enzyme MnmG">
    <location>
        <begin position="1"/>
        <end position="619"/>
    </location>
</feature>
<feature type="binding site" evidence="1">
    <location>
        <begin position="18"/>
        <end position="23"/>
    </location>
    <ligand>
        <name>FAD</name>
        <dbReference type="ChEBI" id="CHEBI:57692"/>
    </ligand>
</feature>
<feature type="binding site" evidence="1">
    <location>
        <position position="130"/>
    </location>
    <ligand>
        <name>FAD</name>
        <dbReference type="ChEBI" id="CHEBI:57692"/>
    </ligand>
</feature>
<feature type="binding site" evidence="1">
    <location>
        <position position="185"/>
    </location>
    <ligand>
        <name>FAD</name>
        <dbReference type="ChEBI" id="CHEBI:57692"/>
    </ligand>
</feature>
<feature type="binding site" evidence="1">
    <location>
        <begin position="277"/>
        <end position="291"/>
    </location>
    <ligand>
        <name>NAD(+)</name>
        <dbReference type="ChEBI" id="CHEBI:57540"/>
    </ligand>
</feature>
<feature type="binding site" evidence="1">
    <location>
        <position position="374"/>
    </location>
    <ligand>
        <name>FAD</name>
        <dbReference type="ChEBI" id="CHEBI:57692"/>
    </ligand>
</feature>
<sequence length="619" mass="69336">MSKKSKNSSIEFDAIVVGGGHAGIEAVYALLKKKLKVVLITLDKKKLASMPCNPAIGGPAKGIITREIDALGGVQGKFSDLAMIQIKYLNESKGPAVLAIRAQIDKEKYSKLILKDLKKQENLLIIEDLVSELLVEKNRVFGLKTAKKQVFFSKTVIITTGTYMDSKVLRGSLAIPSGPDGQQTSNLLSNNLKRLGFELQRLKTGTPPRIFTSSIDFSKVEKEVLPVYNINFSFQSKHKIKKQISCYLTYTTAKTHDIINKNLGKSSMYSGLISGVGPRYCPSIEDKIVRFSEKPRHQIFFEPETKKQDIMYINGLSTSMPEDVQLEMVKTIPGLENAKIAKFGYAIEYDALNPLELKKSLETKKVKGLFMAGQINGTSGYEEAAAQGLVAGINAGQFVLGKKPVEILRNDGYIGVLIDDLVTKGTKEPYRMLTSRAEYRLILRNDNADIRMAKYALKSGLISKKEYLKIKAKYAKIDRKILELSKEFVSPKDELAKKYNLEKRISKLKLISWPNVNFKDILPDFEFGYELTVMARLKGYIQKQNSEAQKMIRLEKLLIPGDLNYEKVANLSSEALDKFQKVRPKTIGEASRISGVNPADIQMLLFHIKVLKMQKVSKI</sequence>
<keyword id="KW-0963">Cytoplasm</keyword>
<keyword id="KW-0274">FAD</keyword>
<keyword id="KW-0285">Flavoprotein</keyword>
<keyword id="KW-0520">NAD</keyword>
<keyword id="KW-0819">tRNA processing</keyword>
<protein>
    <recommendedName>
        <fullName evidence="1">tRNA uridine 5-carboxymethylaminomethyl modification enzyme MnmG</fullName>
    </recommendedName>
    <alternativeName>
        <fullName evidence="1">Glucose-inhibited division protein A</fullName>
    </alternativeName>
</protein>
<comment type="function">
    <text evidence="1">NAD-binding protein involved in the addition of a carboxymethylaminomethyl (cmnm) group at the wobble position (U34) of certain tRNAs, forming tRNA-cmnm(5)s(2)U34.</text>
</comment>
<comment type="cofactor">
    <cofactor evidence="1">
        <name>FAD</name>
        <dbReference type="ChEBI" id="CHEBI:57692"/>
    </cofactor>
</comment>
<comment type="subunit">
    <text evidence="1">Homodimer. Heterotetramer of two MnmE and two MnmG subunits.</text>
</comment>
<comment type="subcellular location">
    <subcellularLocation>
        <location evidence="1">Cytoplasm</location>
    </subcellularLocation>
</comment>
<comment type="similarity">
    <text evidence="1">Belongs to the MnmG family.</text>
</comment>
<dbReference type="EMBL" id="AE017243">
    <property type="protein sequence ID" value="AAZ44097.2"/>
    <property type="molecule type" value="Genomic_DNA"/>
</dbReference>
<dbReference type="RefSeq" id="WP_044284564.1">
    <property type="nucleotide sequence ID" value="NC_007295.1"/>
</dbReference>
<dbReference type="SMR" id="Q4AAU6"/>
<dbReference type="GeneID" id="41334290"/>
<dbReference type="KEGG" id="mhj:MHJ_0003"/>
<dbReference type="eggNOG" id="COG0445">
    <property type="taxonomic scope" value="Bacteria"/>
</dbReference>
<dbReference type="HOGENOM" id="CLU_007831_2_2_14"/>
<dbReference type="OrthoDB" id="9815560at2"/>
<dbReference type="Proteomes" id="UP000000548">
    <property type="component" value="Chromosome"/>
</dbReference>
<dbReference type="GO" id="GO:0005829">
    <property type="term" value="C:cytosol"/>
    <property type="evidence" value="ECO:0007669"/>
    <property type="project" value="TreeGrafter"/>
</dbReference>
<dbReference type="GO" id="GO:0050660">
    <property type="term" value="F:flavin adenine dinucleotide binding"/>
    <property type="evidence" value="ECO:0007669"/>
    <property type="project" value="UniProtKB-UniRule"/>
</dbReference>
<dbReference type="GO" id="GO:0030488">
    <property type="term" value="P:tRNA methylation"/>
    <property type="evidence" value="ECO:0007669"/>
    <property type="project" value="TreeGrafter"/>
</dbReference>
<dbReference type="GO" id="GO:0002098">
    <property type="term" value="P:tRNA wobble uridine modification"/>
    <property type="evidence" value="ECO:0007669"/>
    <property type="project" value="InterPro"/>
</dbReference>
<dbReference type="FunFam" id="1.10.150.570:FF:000001">
    <property type="entry name" value="tRNA uridine 5-carboxymethylaminomethyl modification enzyme MnmG"/>
    <property type="match status" value="1"/>
</dbReference>
<dbReference type="FunFam" id="3.50.50.60:FF:000002">
    <property type="entry name" value="tRNA uridine 5-carboxymethylaminomethyl modification enzyme MnmG"/>
    <property type="match status" value="1"/>
</dbReference>
<dbReference type="Gene3D" id="3.50.50.60">
    <property type="entry name" value="FAD/NAD(P)-binding domain"/>
    <property type="match status" value="2"/>
</dbReference>
<dbReference type="Gene3D" id="1.10.150.570">
    <property type="entry name" value="GidA associated domain, C-terminal subdomain"/>
    <property type="match status" value="1"/>
</dbReference>
<dbReference type="HAMAP" id="MF_00129">
    <property type="entry name" value="MnmG_GidA"/>
    <property type="match status" value="1"/>
</dbReference>
<dbReference type="InterPro" id="IPR036188">
    <property type="entry name" value="FAD/NAD-bd_sf"/>
</dbReference>
<dbReference type="InterPro" id="IPR004416">
    <property type="entry name" value="MnmG"/>
</dbReference>
<dbReference type="InterPro" id="IPR002218">
    <property type="entry name" value="MnmG-rel"/>
</dbReference>
<dbReference type="InterPro" id="IPR020595">
    <property type="entry name" value="MnmG-rel_CS"/>
</dbReference>
<dbReference type="InterPro" id="IPR026904">
    <property type="entry name" value="MnmG_C"/>
</dbReference>
<dbReference type="InterPro" id="IPR047001">
    <property type="entry name" value="MnmG_C_subdom"/>
</dbReference>
<dbReference type="InterPro" id="IPR044920">
    <property type="entry name" value="MnmG_C_subdom_sf"/>
</dbReference>
<dbReference type="InterPro" id="IPR040131">
    <property type="entry name" value="MnmG_N"/>
</dbReference>
<dbReference type="NCBIfam" id="TIGR00136">
    <property type="entry name" value="mnmG_gidA"/>
    <property type="match status" value="1"/>
</dbReference>
<dbReference type="PANTHER" id="PTHR11806">
    <property type="entry name" value="GLUCOSE INHIBITED DIVISION PROTEIN A"/>
    <property type="match status" value="1"/>
</dbReference>
<dbReference type="PANTHER" id="PTHR11806:SF0">
    <property type="entry name" value="PROTEIN MTO1 HOMOLOG, MITOCHONDRIAL"/>
    <property type="match status" value="1"/>
</dbReference>
<dbReference type="Pfam" id="PF01134">
    <property type="entry name" value="GIDA"/>
    <property type="match status" value="1"/>
</dbReference>
<dbReference type="Pfam" id="PF13932">
    <property type="entry name" value="SAM_GIDA_C"/>
    <property type="match status" value="1"/>
</dbReference>
<dbReference type="SMART" id="SM01228">
    <property type="entry name" value="GIDA_assoc_3"/>
    <property type="match status" value="1"/>
</dbReference>
<dbReference type="SUPFAM" id="SSF51905">
    <property type="entry name" value="FAD/NAD(P)-binding domain"/>
    <property type="match status" value="1"/>
</dbReference>
<dbReference type="PROSITE" id="PS01280">
    <property type="entry name" value="GIDA_1"/>
    <property type="match status" value="1"/>
</dbReference>
<dbReference type="PROSITE" id="PS01281">
    <property type="entry name" value="GIDA_2"/>
    <property type="match status" value="1"/>
</dbReference>
<gene>
    <name evidence="1" type="primary">mnmG</name>
    <name evidence="1" type="synonym">gidA</name>
    <name type="ordered locus">MHJ_0003</name>
</gene>